<gene>
    <name evidence="1" type="primary">rplT</name>
    <name type="ordered locus">SAV1678</name>
</gene>
<keyword id="KW-0687">Ribonucleoprotein</keyword>
<keyword id="KW-0689">Ribosomal protein</keyword>
<keyword id="KW-0694">RNA-binding</keyword>
<keyword id="KW-0699">rRNA-binding</keyword>
<feature type="chain" id="PRO_0000177224" description="Large ribosomal subunit protein bL20">
    <location>
        <begin position="1"/>
        <end position="118"/>
    </location>
</feature>
<comment type="function">
    <text evidence="1">Binds directly to 23S ribosomal RNA and is necessary for the in vitro assembly process of the 50S ribosomal subunit. It is not involved in the protein synthesizing functions of that subunit.</text>
</comment>
<comment type="similarity">
    <text evidence="1">Belongs to the bacterial ribosomal protein bL20 family.</text>
</comment>
<organism>
    <name type="scientific">Staphylococcus aureus (strain Mu50 / ATCC 700699)</name>
    <dbReference type="NCBI Taxonomy" id="158878"/>
    <lineage>
        <taxon>Bacteria</taxon>
        <taxon>Bacillati</taxon>
        <taxon>Bacillota</taxon>
        <taxon>Bacilli</taxon>
        <taxon>Bacillales</taxon>
        <taxon>Staphylococcaceae</taxon>
        <taxon>Staphylococcus</taxon>
    </lineage>
</organism>
<dbReference type="EMBL" id="BA000017">
    <property type="protein sequence ID" value="BAB57840.1"/>
    <property type="molecule type" value="Genomic_DNA"/>
</dbReference>
<dbReference type="RefSeq" id="WP_001138360.1">
    <property type="nucleotide sequence ID" value="NC_002758.2"/>
</dbReference>
<dbReference type="SMR" id="P66107"/>
<dbReference type="DNASU" id="1121653"/>
<dbReference type="GeneID" id="98346040"/>
<dbReference type="KEGG" id="sav:SAV1678"/>
<dbReference type="HOGENOM" id="CLU_123265_0_1_9"/>
<dbReference type="PhylomeDB" id="P66107"/>
<dbReference type="Proteomes" id="UP000002481">
    <property type="component" value="Chromosome"/>
</dbReference>
<dbReference type="GO" id="GO:1990904">
    <property type="term" value="C:ribonucleoprotein complex"/>
    <property type="evidence" value="ECO:0007669"/>
    <property type="project" value="UniProtKB-KW"/>
</dbReference>
<dbReference type="GO" id="GO:0005840">
    <property type="term" value="C:ribosome"/>
    <property type="evidence" value="ECO:0007669"/>
    <property type="project" value="UniProtKB-KW"/>
</dbReference>
<dbReference type="GO" id="GO:0019843">
    <property type="term" value="F:rRNA binding"/>
    <property type="evidence" value="ECO:0007669"/>
    <property type="project" value="UniProtKB-UniRule"/>
</dbReference>
<dbReference type="GO" id="GO:0003735">
    <property type="term" value="F:structural constituent of ribosome"/>
    <property type="evidence" value="ECO:0007669"/>
    <property type="project" value="InterPro"/>
</dbReference>
<dbReference type="GO" id="GO:0000027">
    <property type="term" value="P:ribosomal large subunit assembly"/>
    <property type="evidence" value="ECO:0007669"/>
    <property type="project" value="UniProtKB-UniRule"/>
</dbReference>
<dbReference type="GO" id="GO:0006412">
    <property type="term" value="P:translation"/>
    <property type="evidence" value="ECO:0007669"/>
    <property type="project" value="InterPro"/>
</dbReference>
<dbReference type="CDD" id="cd07026">
    <property type="entry name" value="Ribosomal_L20"/>
    <property type="match status" value="1"/>
</dbReference>
<dbReference type="FunFam" id="1.10.1900.20:FF:000001">
    <property type="entry name" value="50S ribosomal protein L20"/>
    <property type="match status" value="1"/>
</dbReference>
<dbReference type="Gene3D" id="6.10.160.10">
    <property type="match status" value="1"/>
</dbReference>
<dbReference type="Gene3D" id="1.10.1900.20">
    <property type="entry name" value="Ribosomal protein L20"/>
    <property type="match status" value="1"/>
</dbReference>
<dbReference type="HAMAP" id="MF_00382">
    <property type="entry name" value="Ribosomal_bL20"/>
    <property type="match status" value="1"/>
</dbReference>
<dbReference type="InterPro" id="IPR005813">
    <property type="entry name" value="Ribosomal_bL20"/>
</dbReference>
<dbReference type="InterPro" id="IPR049946">
    <property type="entry name" value="RIBOSOMAL_L20_CS"/>
</dbReference>
<dbReference type="InterPro" id="IPR035566">
    <property type="entry name" value="Ribosomal_protein_bL20_C"/>
</dbReference>
<dbReference type="NCBIfam" id="TIGR01032">
    <property type="entry name" value="rplT_bact"/>
    <property type="match status" value="1"/>
</dbReference>
<dbReference type="PANTHER" id="PTHR10986">
    <property type="entry name" value="39S RIBOSOMAL PROTEIN L20"/>
    <property type="match status" value="1"/>
</dbReference>
<dbReference type="Pfam" id="PF00453">
    <property type="entry name" value="Ribosomal_L20"/>
    <property type="match status" value="1"/>
</dbReference>
<dbReference type="PRINTS" id="PR00062">
    <property type="entry name" value="RIBOSOMALL20"/>
</dbReference>
<dbReference type="SUPFAM" id="SSF74731">
    <property type="entry name" value="Ribosomal protein L20"/>
    <property type="match status" value="1"/>
</dbReference>
<dbReference type="PROSITE" id="PS00937">
    <property type="entry name" value="RIBOSOMAL_L20"/>
    <property type="match status" value="1"/>
</dbReference>
<reference key="1">
    <citation type="journal article" date="2001" name="Lancet">
        <title>Whole genome sequencing of meticillin-resistant Staphylococcus aureus.</title>
        <authorList>
            <person name="Kuroda M."/>
            <person name="Ohta T."/>
            <person name="Uchiyama I."/>
            <person name="Baba T."/>
            <person name="Yuzawa H."/>
            <person name="Kobayashi I."/>
            <person name="Cui L."/>
            <person name="Oguchi A."/>
            <person name="Aoki K."/>
            <person name="Nagai Y."/>
            <person name="Lian J.-Q."/>
            <person name="Ito T."/>
            <person name="Kanamori M."/>
            <person name="Matsumaru H."/>
            <person name="Maruyama A."/>
            <person name="Murakami H."/>
            <person name="Hosoyama A."/>
            <person name="Mizutani-Ui Y."/>
            <person name="Takahashi N.K."/>
            <person name="Sawano T."/>
            <person name="Inoue R."/>
            <person name="Kaito C."/>
            <person name="Sekimizu K."/>
            <person name="Hirakawa H."/>
            <person name="Kuhara S."/>
            <person name="Goto S."/>
            <person name="Yabuzaki J."/>
            <person name="Kanehisa M."/>
            <person name="Yamashita A."/>
            <person name="Oshima K."/>
            <person name="Furuya K."/>
            <person name="Yoshino C."/>
            <person name="Shiba T."/>
            <person name="Hattori M."/>
            <person name="Ogasawara N."/>
            <person name="Hayashi H."/>
            <person name="Hiramatsu K."/>
        </authorList>
    </citation>
    <scope>NUCLEOTIDE SEQUENCE [LARGE SCALE GENOMIC DNA]</scope>
    <source>
        <strain>Mu50 / ATCC 700699</strain>
    </source>
</reference>
<proteinExistence type="inferred from homology"/>
<protein>
    <recommendedName>
        <fullName evidence="1">Large ribosomal subunit protein bL20</fullName>
    </recommendedName>
    <alternativeName>
        <fullName evidence="2">50S ribosomal protein L20</fullName>
    </alternativeName>
</protein>
<name>RL20_STAAM</name>
<sequence>MPRVKGGTVTRARRKKTIKLAKGYFGSKHTLYKVAKQQVMKSGQYAFRDRRQRKRDFRKLWITRINAAARQHEMSYSRLMNGLKKAGIDINRKMLSEIAISDEKAFAQLVTKAKDALK</sequence>
<evidence type="ECO:0000255" key="1">
    <source>
        <dbReference type="HAMAP-Rule" id="MF_00382"/>
    </source>
</evidence>
<evidence type="ECO:0000305" key="2"/>
<accession>P66107</accession>
<accession>Q99TI3</accession>